<dbReference type="EMBL" id="CP000863">
    <property type="protein sequence ID" value="ACC56464.1"/>
    <property type="molecule type" value="Genomic_DNA"/>
</dbReference>
<dbReference type="RefSeq" id="WP_000906487.1">
    <property type="nucleotide sequence ID" value="NZ_CP031380.1"/>
</dbReference>
<dbReference type="SMR" id="B2HWK5"/>
<dbReference type="GeneID" id="92893212"/>
<dbReference type="KEGG" id="abc:ACICU_01152"/>
<dbReference type="HOGENOM" id="CLU_164837_2_1_6"/>
<dbReference type="Proteomes" id="UP000008839">
    <property type="component" value="Chromosome"/>
</dbReference>
<dbReference type="GO" id="GO:0005829">
    <property type="term" value="C:cytosol"/>
    <property type="evidence" value="ECO:0007669"/>
    <property type="project" value="TreeGrafter"/>
</dbReference>
<dbReference type="GO" id="GO:0048027">
    <property type="term" value="F:mRNA 5'-UTR binding"/>
    <property type="evidence" value="ECO:0007669"/>
    <property type="project" value="UniProtKB-UniRule"/>
</dbReference>
<dbReference type="GO" id="GO:0006402">
    <property type="term" value="P:mRNA catabolic process"/>
    <property type="evidence" value="ECO:0007669"/>
    <property type="project" value="InterPro"/>
</dbReference>
<dbReference type="GO" id="GO:0045947">
    <property type="term" value="P:negative regulation of translational initiation"/>
    <property type="evidence" value="ECO:0007669"/>
    <property type="project" value="UniProtKB-UniRule"/>
</dbReference>
<dbReference type="GO" id="GO:0045948">
    <property type="term" value="P:positive regulation of translational initiation"/>
    <property type="evidence" value="ECO:0007669"/>
    <property type="project" value="UniProtKB-UniRule"/>
</dbReference>
<dbReference type="GO" id="GO:0006109">
    <property type="term" value="P:regulation of carbohydrate metabolic process"/>
    <property type="evidence" value="ECO:0007669"/>
    <property type="project" value="UniProtKB-UniRule"/>
</dbReference>
<dbReference type="FunFam" id="2.60.40.4380:FF:000001">
    <property type="entry name" value="Translational regulator CsrA"/>
    <property type="match status" value="1"/>
</dbReference>
<dbReference type="Gene3D" id="2.60.40.4380">
    <property type="entry name" value="Translational regulator CsrA"/>
    <property type="match status" value="1"/>
</dbReference>
<dbReference type="HAMAP" id="MF_00167">
    <property type="entry name" value="CsrA"/>
    <property type="match status" value="1"/>
</dbReference>
<dbReference type="InterPro" id="IPR003751">
    <property type="entry name" value="CsrA"/>
</dbReference>
<dbReference type="InterPro" id="IPR036107">
    <property type="entry name" value="CsrA_sf"/>
</dbReference>
<dbReference type="NCBIfam" id="TIGR00202">
    <property type="entry name" value="csrA"/>
    <property type="match status" value="1"/>
</dbReference>
<dbReference type="NCBIfam" id="NF002469">
    <property type="entry name" value="PRK01712.1"/>
    <property type="match status" value="1"/>
</dbReference>
<dbReference type="PANTHER" id="PTHR34984">
    <property type="entry name" value="CARBON STORAGE REGULATOR"/>
    <property type="match status" value="1"/>
</dbReference>
<dbReference type="PANTHER" id="PTHR34984:SF1">
    <property type="entry name" value="CARBON STORAGE REGULATOR"/>
    <property type="match status" value="1"/>
</dbReference>
<dbReference type="Pfam" id="PF02599">
    <property type="entry name" value="CsrA"/>
    <property type="match status" value="1"/>
</dbReference>
<dbReference type="SUPFAM" id="SSF117130">
    <property type="entry name" value="CsrA-like"/>
    <property type="match status" value="1"/>
</dbReference>
<protein>
    <recommendedName>
        <fullName evidence="1">Translational regulator CsrA</fullName>
    </recommendedName>
    <alternativeName>
        <fullName evidence="1">Carbon storage regulator</fullName>
    </alternativeName>
</protein>
<organism>
    <name type="scientific">Acinetobacter baumannii (strain ACICU)</name>
    <dbReference type="NCBI Taxonomy" id="405416"/>
    <lineage>
        <taxon>Bacteria</taxon>
        <taxon>Pseudomonadati</taxon>
        <taxon>Pseudomonadota</taxon>
        <taxon>Gammaproteobacteria</taxon>
        <taxon>Moraxellales</taxon>
        <taxon>Moraxellaceae</taxon>
        <taxon>Acinetobacter</taxon>
        <taxon>Acinetobacter calcoaceticus/baumannii complex</taxon>
    </lineage>
</organism>
<accession>B2HWK5</accession>
<evidence type="ECO:0000255" key="1">
    <source>
        <dbReference type="HAMAP-Rule" id="MF_00167"/>
    </source>
</evidence>
<gene>
    <name evidence="1" type="primary">csrA</name>
    <name type="ordered locus">ACICU_01152</name>
</gene>
<keyword id="KW-0010">Activator</keyword>
<keyword id="KW-0963">Cytoplasm</keyword>
<keyword id="KW-0678">Repressor</keyword>
<keyword id="KW-0694">RNA-binding</keyword>
<keyword id="KW-0810">Translation regulation</keyword>
<reference key="1">
    <citation type="journal article" date="2008" name="Antimicrob. Agents Chemother.">
        <title>Whole-genome pyrosequencing of an epidemic multidrug-resistant Acinetobacter baumannii strain belonging to the European clone II group.</title>
        <authorList>
            <person name="Iacono M."/>
            <person name="Villa L."/>
            <person name="Fortini D."/>
            <person name="Bordoni R."/>
            <person name="Imperi F."/>
            <person name="Bonnal R.J."/>
            <person name="Sicheritz-Ponten T."/>
            <person name="De Bellis G."/>
            <person name="Visca P."/>
            <person name="Cassone A."/>
            <person name="Carattoli A."/>
        </authorList>
    </citation>
    <scope>NUCLEOTIDE SEQUENCE [LARGE SCALE GENOMIC DNA]</scope>
    <source>
        <strain>ACICU</strain>
    </source>
</reference>
<sequence>MLILTRRVGETLMIGDQVSVTVLGVKGNQVRIGVNAPKEVSVHREEIYQRIQHERAMHEHLQHLDQDYQVSYEDDNYAQKNFNR</sequence>
<feature type="chain" id="PRO_1000097471" description="Translational regulator CsrA">
    <location>
        <begin position="1"/>
        <end position="84"/>
    </location>
</feature>
<proteinExistence type="inferred from homology"/>
<name>CSRA_ACIBC</name>
<comment type="function">
    <text evidence="1">A key translational regulator that binds mRNA to regulate translation initiation and/or mRNA stability. Mediates global changes in gene expression, shifting from rapid growth to stress survival by linking envelope stress, the stringent response and the catabolite repression systems. Usually binds in the 5'-UTR; binding at or near the Shine-Dalgarno sequence prevents ribosome-binding, repressing translation, binding elsewhere in the 5'-UTR can activate translation and/or stabilize the mRNA. Its function is antagonized by small RNA(s).</text>
</comment>
<comment type="subunit">
    <text evidence="1">Homodimer; the beta-strands of each monomer intercalate to form a hydrophobic core, while the alpha-helices form wings that extend away from the core.</text>
</comment>
<comment type="subcellular location">
    <subcellularLocation>
        <location evidence="1">Cytoplasm</location>
    </subcellularLocation>
</comment>
<comment type="similarity">
    <text evidence="1">Belongs to the CsrA/RsmA family.</text>
</comment>